<gene>
    <name type="primary">CP12</name>
</gene>
<comment type="developmental stage">
    <text>Found in flexible cuticles of all three metamorphic stages of H.cecropia.</text>
</comment>
<accession>P45589</accession>
<feature type="signal peptide" evidence="1">
    <location>
        <begin position="1"/>
        <end position="16"/>
    </location>
</feature>
<feature type="chain" id="PRO_0000006385" description="Flexible cuticle protein 12">
    <location>
        <begin position="17"/>
        <end position="105"/>
    </location>
</feature>
<feature type="domain" description="Chitin-binding type R&amp;R" evidence="2">
    <location>
        <begin position="37"/>
        <end position="105"/>
    </location>
</feature>
<organism>
    <name type="scientific">Hyalophora cecropia</name>
    <name type="common">Cecropia moth</name>
    <name type="synonym">Samia cecropia</name>
    <dbReference type="NCBI Taxonomy" id="7123"/>
    <lineage>
        <taxon>Eukaryota</taxon>
        <taxon>Metazoa</taxon>
        <taxon>Ecdysozoa</taxon>
        <taxon>Arthropoda</taxon>
        <taxon>Hexapoda</taxon>
        <taxon>Insecta</taxon>
        <taxon>Pterygota</taxon>
        <taxon>Neoptera</taxon>
        <taxon>Endopterygota</taxon>
        <taxon>Lepidoptera</taxon>
        <taxon>Glossata</taxon>
        <taxon>Ditrysia</taxon>
        <taxon>Bombycoidea</taxon>
        <taxon>Saturniidae</taxon>
        <taxon>Saturniinae</taxon>
        <taxon>Attacini</taxon>
        <taxon>Hyalophora</taxon>
    </lineage>
</organism>
<proteinExistence type="evidence at transcript level"/>
<sequence length="105" mass="11092">MKSFVVVALLVAVAAAVPLTPDGDAQILKYENDNIGVEGFQYGYETSNGIQHQESGQLNNVGTENEGIEVRGQFSYVGPDGVTYSVTYTAGQEGFKPVGAHIPVA</sequence>
<protein>
    <recommendedName>
        <fullName>Flexible cuticle protein 12</fullName>
    </recommendedName>
</protein>
<dbReference type="EMBL" id="U08026">
    <property type="protein sequence ID" value="AAA85640.1"/>
    <property type="molecule type" value="Genomic_DNA"/>
</dbReference>
<dbReference type="GO" id="GO:0062129">
    <property type="term" value="C:chitin-based extracellular matrix"/>
    <property type="evidence" value="ECO:0007669"/>
    <property type="project" value="TreeGrafter"/>
</dbReference>
<dbReference type="GO" id="GO:0008010">
    <property type="term" value="F:structural constituent of chitin-based larval cuticle"/>
    <property type="evidence" value="ECO:0007669"/>
    <property type="project" value="TreeGrafter"/>
</dbReference>
<dbReference type="InterPro" id="IPR031311">
    <property type="entry name" value="CHIT_BIND_RR_consensus"/>
</dbReference>
<dbReference type="InterPro" id="IPR050468">
    <property type="entry name" value="Cuticle_Struct_Prot"/>
</dbReference>
<dbReference type="InterPro" id="IPR000618">
    <property type="entry name" value="Insect_cuticle"/>
</dbReference>
<dbReference type="PANTHER" id="PTHR10380:SF218">
    <property type="entry name" value="ADULT CUTICLE PROTEIN 65AA-RELATED"/>
    <property type="match status" value="1"/>
</dbReference>
<dbReference type="PANTHER" id="PTHR10380">
    <property type="entry name" value="CUTICLE PROTEIN"/>
    <property type="match status" value="1"/>
</dbReference>
<dbReference type="Pfam" id="PF00379">
    <property type="entry name" value="Chitin_bind_4"/>
    <property type="match status" value="1"/>
</dbReference>
<dbReference type="PRINTS" id="PR00947">
    <property type="entry name" value="CUTICLE"/>
</dbReference>
<dbReference type="PROSITE" id="PS00233">
    <property type="entry name" value="CHIT_BIND_RR_1"/>
    <property type="match status" value="1"/>
</dbReference>
<dbReference type="PROSITE" id="PS51155">
    <property type="entry name" value="CHIT_BIND_RR_2"/>
    <property type="match status" value="1"/>
</dbReference>
<evidence type="ECO:0000255" key="1"/>
<evidence type="ECO:0000255" key="2">
    <source>
        <dbReference type="PROSITE-ProRule" id="PRU00497"/>
    </source>
</evidence>
<keyword id="KW-0193">Cuticle</keyword>
<keyword id="KW-0732">Signal</keyword>
<name>CU12_HYACE</name>
<reference key="1">
    <citation type="journal article" date="1994" name="Insect Biochem. Mol. Biol.">
        <title>Identification of the cDNA, gene and promoter for a major protein from flexible cuticles of the giant silkmoth Hyalophora cecropia.</title>
        <authorList>
            <person name="Binger L.C."/>
            <person name="Willis J.H."/>
        </authorList>
    </citation>
    <scope>NUCLEOTIDE SEQUENCE [GENOMIC DNA]</scope>
</reference>